<evidence type="ECO:0000250" key="1"/>
<evidence type="ECO:0000255" key="2"/>
<evidence type="ECO:0000305" key="3"/>
<keyword id="KW-0998">Cell outer membrane</keyword>
<keyword id="KW-0143">Chaperone</keyword>
<keyword id="KW-0449">Lipoprotein</keyword>
<keyword id="KW-0472">Membrane</keyword>
<keyword id="KW-0564">Palmitate</keyword>
<keyword id="KW-0653">Protein transport</keyword>
<keyword id="KW-1185">Reference proteome</keyword>
<keyword id="KW-0732">Signal</keyword>
<keyword id="KW-0813">Transport</keyword>
<organism>
    <name type="scientific">Haemophilus influenzae (strain ATCC 51907 / DSM 11121 / KW20 / Rd)</name>
    <dbReference type="NCBI Taxonomy" id="71421"/>
    <lineage>
        <taxon>Bacteria</taxon>
        <taxon>Pseudomonadati</taxon>
        <taxon>Pseudomonadota</taxon>
        <taxon>Gammaproteobacteria</taxon>
        <taxon>Pasteurellales</taxon>
        <taxon>Pasteurellaceae</taxon>
        <taxon>Haemophilus</taxon>
    </lineage>
</organism>
<name>LOLB_HAEIN</name>
<accession>P45270</accession>
<gene>
    <name type="primary">lolB</name>
    <name type="synonym">hemM</name>
    <name type="ordered locus">HI_1607</name>
</gene>
<reference key="1">
    <citation type="journal article" date="1995" name="Science">
        <title>Whole-genome random sequencing and assembly of Haemophilus influenzae Rd.</title>
        <authorList>
            <person name="Fleischmann R.D."/>
            <person name="Adams M.D."/>
            <person name="White O."/>
            <person name="Clayton R.A."/>
            <person name="Kirkness E.F."/>
            <person name="Kerlavage A.R."/>
            <person name="Bult C.J."/>
            <person name="Tomb J.-F."/>
            <person name="Dougherty B.A."/>
            <person name="Merrick J.M."/>
            <person name="McKenney K."/>
            <person name="Sutton G.G."/>
            <person name="FitzHugh W."/>
            <person name="Fields C.A."/>
            <person name="Gocayne J.D."/>
            <person name="Scott J.D."/>
            <person name="Shirley R."/>
            <person name="Liu L.-I."/>
            <person name="Glodek A."/>
            <person name="Kelley J.M."/>
            <person name="Weidman J.F."/>
            <person name="Phillips C.A."/>
            <person name="Spriggs T."/>
            <person name="Hedblom E."/>
            <person name="Cotton M.D."/>
            <person name="Utterback T.R."/>
            <person name="Hanna M.C."/>
            <person name="Nguyen D.T."/>
            <person name="Saudek D.M."/>
            <person name="Brandon R.C."/>
            <person name="Fine L.D."/>
            <person name="Fritchman J.L."/>
            <person name="Fuhrmann J.L."/>
            <person name="Geoghagen N.S.M."/>
            <person name="Gnehm C.L."/>
            <person name="McDonald L.A."/>
            <person name="Small K.V."/>
            <person name="Fraser C.M."/>
            <person name="Smith H.O."/>
            <person name="Venter J.C."/>
        </authorList>
    </citation>
    <scope>NUCLEOTIDE SEQUENCE [LARGE SCALE GENOMIC DNA]</scope>
    <source>
        <strain>ATCC 51907 / DSM 11121 / KW20 / Rd</strain>
    </source>
</reference>
<dbReference type="EMBL" id="L42023">
    <property type="protein sequence ID" value="AAC23251.1"/>
    <property type="molecule type" value="Genomic_DNA"/>
</dbReference>
<dbReference type="PIR" id="I64172">
    <property type="entry name" value="I64172"/>
</dbReference>
<dbReference type="RefSeq" id="NP_439749.1">
    <property type="nucleotide sequence ID" value="NC_000907.1"/>
</dbReference>
<dbReference type="SMR" id="P45270"/>
<dbReference type="STRING" id="71421.HI_1607"/>
<dbReference type="EnsemblBacteria" id="AAC23251">
    <property type="protein sequence ID" value="AAC23251"/>
    <property type="gene ID" value="HI_1607"/>
</dbReference>
<dbReference type="KEGG" id="hin:HI_1607"/>
<dbReference type="PATRIC" id="fig|71421.8.peg.1680"/>
<dbReference type="eggNOG" id="COG3017">
    <property type="taxonomic scope" value="Bacteria"/>
</dbReference>
<dbReference type="HOGENOM" id="CLU_092816_1_1_6"/>
<dbReference type="OrthoDB" id="9797618at2"/>
<dbReference type="PhylomeDB" id="P45270"/>
<dbReference type="BioCyc" id="HINF71421:G1GJ1-1620-MONOMER"/>
<dbReference type="Proteomes" id="UP000000579">
    <property type="component" value="Chromosome"/>
</dbReference>
<dbReference type="GO" id="GO:0009279">
    <property type="term" value="C:cell outer membrane"/>
    <property type="evidence" value="ECO:0007669"/>
    <property type="project" value="UniProtKB-SubCell"/>
</dbReference>
<dbReference type="GO" id="GO:0044874">
    <property type="term" value="P:lipoprotein localization to outer membrane"/>
    <property type="evidence" value="ECO:0007669"/>
    <property type="project" value="UniProtKB-UniRule"/>
</dbReference>
<dbReference type="GO" id="GO:0015031">
    <property type="term" value="P:protein transport"/>
    <property type="evidence" value="ECO:0007669"/>
    <property type="project" value="UniProtKB-KW"/>
</dbReference>
<dbReference type="CDD" id="cd16326">
    <property type="entry name" value="LolB"/>
    <property type="match status" value="1"/>
</dbReference>
<dbReference type="Gene3D" id="2.50.20.10">
    <property type="entry name" value="Lipoprotein localisation LolA/LolB/LppX"/>
    <property type="match status" value="1"/>
</dbReference>
<dbReference type="HAMAP" id="MF_00233">
    <property type="entry name" value="LolB"/>
    <property type="match status" value="1"/>
</dbReference>
<dbReference type="InterPro" id="IPR029046">
    <property type="entry name" value="LolA/LolB/LppX"/>
</dbReference>
<dbReference type="InterPro" id="IPR004565">
    <property type="entry name" value="OM_lipoprot_LolB"/>
</dbReference>
<dbReference type="NCBIfam" id="TIGR00548">
    <property type="entry name" value="lolB"/>
    <property type="match status" value="1"/>
</dbReference>
<dbReference type="Pfam" id="PF03550">
    <property type="entry name" value="LolB"/>
    <property type="match status" value="1"/>
</dbReference>
<dbReference type="SUPFAM" id="SSF89392">
    <property type="entry name" value="Prokaryotic lipoproteins and lipoprotein localization factors"/>
    <property type="match status" value="1"/>
</dbReference>
<dbReference type="PROSITE" id="PS51257">
    <property type="entry name" value="PROKAR_LIPOPROTEIN"/>
    <property type="match status" value="1"/>
</dbReference>
<protein>
    <recommendedName>
        <fullName>Outer-membrane lipoprotein LolB</fullName>
    </recommendedName>
</protein>
<comment type="function">
    <text evidence="1">Plays a critical role in the incorporation of lipoproteins in the outer membrane after they are released by the LolA protein.</text>
</comment>
<comment type="subunit">
    <text evidence="1">Monomer.</text>
</comment>
<comment type="subcellular location">
    <subcellularLocation>
        <location evidence="1">Cell outer membrane</location>
        <topology evidence="1">Lipid-anchor</topology>
    </subcellularLocation>
</comment>
<comment type="similarity">
    <text evidence="3">Belongs to the LolB family.</text>
</comment>
<comment type="caution">
    <text evidence="3">Was originally thought to be involved in delta-aminolevulinic acid biosynthesis.</text>
</comment>
<proteinExistence type="inferred from homology"/>
<sequence>MNNMKTFKFFTALFATAILTACTLDMERPTNVQYIDKTDAIWQQHLQKIQKIQSYQAKGQIGYISPTERFSSRFEWQYQNPKSYTLKLYSLISKSTLWIQMHQSGMTISDNNGNQQSAANSKLLLQEIIGMDVPLEHLAYWLKGQPAMNADYQVGTNHLLGAFTYHVDGSQWTADYLTYHSNNSMPENILLKNDSTKQTLKIRVDEWIY</sequence>
<feature type="signal peptide" evidence="2">
    <location>
        <begin position="1"/>
        <end position="21"/>
    </location>
</feature>
<feature type="chain" id="PRO_0000018300" description="Outer-membrane lipoprotein LolB">
    <location>
        <begin position="22"/>
        <end position="209"/>
    </location>
</feature>
<feature type="lipid moiety-binding region" description="N-palmitoyl cysteine" evidence="2">
    <location>
        <position position="22"/>
    </location>
</feature>
<feature type="lipid moiety-binding region" description="S-diacylglycerol cysteine" evidence="2">
    <location>
        <position position="22"/>
    </location>
</feature>